<sequence>MNNEYPYSADEVLYKAKSYLSTSEYEYVLKSYHIAYEAHKGQFRKNGLPYIMHPIQVAGILTEMRLDGPTIVAGFLHDVIEDTSYTFEDVKDMFNEEIARIVDGVTKLKKVKYRSKEEQQAENHRKLFIAIAKDVRVILVKLADRLHNMRTLKAMPREKQVRISKETLEIYAPLAHRLGINTIKWELEDTALRYIDSVQYFRIVNLMKKKRSEREAYITNAINKIKNEMTKMNLSGEINGRPKHIYSIYRKMIKQKKQFDQIFDLLAIRIIVNSINDCYATLGLVHTLWKPMPGRFKDYIAMPKQNMYQSLHTTVVGPNGDPLEIQIRTHEMHEIAEHGVAAHWAYKEGKTVNQKTQDFQNKLNWLKELAETDHTSADAQEFMESLKYDLQSDKVYAFTPASDVIELPYGAVPIDFAYAIHSEVGNKMIGAKVNGKIVPIDYVLQTGDIIEIRTSKHSYGPSRDWLKIVKSSSAKSKIKSFFKKQDRSSNIEKGKFMVEAEIKEQGFRVEDILTEKNLEVVNEKYHFANDEDLYAAVGFGGVTSIQIVNKLTERQRILDKQKALNEAQEVTKSVPIKKDITTDSGVYVEGLENVLIKLSKCCNPIPGDDIVGYITKGHGIKVHRTDCPNIKNETDRLISVEWVKSKDSTQQYQVDLEVTAYDRNGLLNEVLQAVNSTAGSLIKVSGRSDIDKNAVINISVMVKNVNDVYRVVEKIKQLGDVYTVSRVWN</sequence>
<comment type="function">
    <text evidence="1">In eubacteria ppGpp (guanosine 3'-diphosphate 5'-diphosphate) is a mediator of the stringent response that coordinates a variety of cellular activities in response to changes in nutritional abundance. This enzyme catalyzes the formation of pppGpp which is then hydrolyzed to form ppGpp (By similarity).</text>
</comment>
<comment type="catalytic activity">
    <reaction>
        <text>GTP + ATP = guanosine 3'-diphosphate 5'-triphosphate + AMP</text>
        <dbReference type="Rhea" id="RHEA:22088"/>
        <dbReference type="ChEBI" id="CHEBI:30616"/>
        <dbReference type="ChEBI" id="CHEBI:37565"/>
        <dbReference type="ChEBI" id="CHEBI:142410"/>
        <dbReference type="ChEBI" id="CHEBI:456215"/>
        <dbReference type="EC" id="2.7.6.5"/>
    </reaction>
</comment>
<comment type="pathway">
    <text>Purine metabolism; ppGpp biosynthesis; ppGpp from GTP: step 1/2.</text>
</comment>
<comment type="similarity">
    <text evidence="5">Belongs to the RelA/SpoT family.</text>
</comment>
<proteinExistence type="inferred from homology"/>
<name>RELA_STAES</name>
<protein>
    <recommendedName>
        <fullName>GTP pyrophosphokinase</fullName>
        <ecNumber>2.7.6.5</ecNumber>
    </recommendedName>
    <alternativeName>
        <fullName>(p)ppGpp synthase</fullName>
    </alternativeName>
    <alternativeName>
        <fullName>ATP:GTP 3'-pyrophosphotransferase</fullName>
    </alternativeName>
    <alternativeName>
        <fullName>ppGpp synthase I</fullName>
    </alternativeName>
</protein>
<keyword id="KW-0067">ATP-binding</keyword>
<keyword id="KW-0342">GTP-binding</keyword>
<keyword id="KW-0418">Kinase</keyword>
<keyword id="KW-0547">Nucleotide-binding</keyword>
<keyword id="KW-0808">Transferase</keyword>
<feature type="chain" id="PRO_0000166561" description="GTP pyrophosphokinase">
    <location>
        <begin position="1"/>
        <end position="729"/>
    </location>
</feature>
<feature type="domain" description="HD" evidence="3">
    <location>
        <begin position="50"/>
        <end position="149"/>
    </location>
</feature>
<feature type="domain" description="TGS" evidence="4">
    <location>
        <begin position="393"/>
        <end position="454"/>
    </location>
</feature>
<feature type="domain" description="ACT" evidence="2">
    <location>
        <begin position="655"/>
        <end position="729"/>
    </location>
</feature>
<accession>Q8CS97</accession>
<organism>
    <name type="scientific">Staphylococcus epidermidis (strain ATCC 12228 / FDA PCI 1200)</name>
    <dbReference type="NCBI Taxonomy" id="176280"/>
    <lineage>
        <taxon>Bacteria</taxon>
        <taxon>Bacillati</taxon>
        <taxon>Bacillota</taxon>
        <taxon>Bacilli</taxon>
        <taxon>Bacillales</taxon>
        <taxon>Staphylococcaceae</taxon>
        <taxon>Staphylococcus</taxon>
    </lineage>
</organism>
<reference key="1">
    <citation type="journal article" date="2003" name="Mol. Microbiol.">
        <title>Genome-based analysis of virulence genes in a non-biofilm-forming Staphylococcus epidermidis strain (ATCC 12228).</title>
        <authorList>
            <person name="Zhang Y.-Q."/>
            <person name="Ren S.-X."/>
            <person name="Li H.-L."/>
            <person name="Wang Y.-X."/>
            <person name="Fu G."/>
            <person name="Yang J."/>
            <person name="Qin Z.-Q."/>
            <person name="Miao Y.-G."/>
            <person name="Wang W.-Y."/>
            <person name="Chen R.-S."/>
            <person name="Shen Y."/>
            <person name="Chen Z."/>
            <person name="Yuan Z.-H."/>
            <person name="Zhao G.-P."/>
            <person name="Qu D."/>
            <person name="Danchin A."/>
            <person name="Wen Y.-M."/>
        </authorList>
    </citation>
    <scope>NUCLEOTIDE SEQUENCE [LARGE SCALE GENOMIC DNA]</scope>
    <source>
        <strain>ATCC 12228 / FDA PCI 1200</strain>
    </source>
</reference>
<gene>
    <name type="primary">relA</name>
    <name type="ordered locus">SE_1315</name>
</gene>
<evidence type="ECO:0000250" key="1"/>
<evidence type="ECO:0000255" key="2">
    <source>
        <dbReference type="PROSITE-ProRule" id="PRU01007"/>
    </source>
</evidence>
<evidence type="ECO:0000255" key="3">
    <source>
        <dbReference type="PROSITE-ProRule" id="PRU01175"/>
    </source>
</evidence>
<evidence type="ECO:0000255" key="4">
    <source>
        <dbReference type="PROSITE-ProRule" id="PRU01228"/>
    </source>
</evidence>
<evidence type="ECO:0000305" key="5"/>
<dbReference type="EC" id="2.7.6.5"/>
<dbReference type="EMBL" id="AE015929">
    <property type="protein sequence ID" value="AAO04914.1"/>
    <property type="molecule type" value="Genomic_DNA"/>
</dbReference>
<dbReference type="RefSeq" id="NP_764870.1">
    <property type="nucleotide sequence ID" value="NC_004461.1"/>
</dbReference>
<dbReference type="RefSeq" id="WP_001832683.1">
    <property type="nucleotide sequence ID" value="NZ_WBME01000059.1"/>
</dbReference>
<dbReference type="SMR" id="Q8CS97"/>
<dbReference type="KEGG" id="sep:SE_1315"/>
<dbReference type="PATRIC" id="fig|176280.10.peg.1284"/>
<dbReference type="eggNOG" id="COG0317">
    <property type="taxonomic scope" value="Bacteria"/>
</dbReference>
<dbReference type="HOGENOM" id="CLU_012300_3_0_9"/>
<dbReference type="OrthoDB" id="9805041at2"/>
<dbReference type="UniPathway" id="UPA00908">
    <property type="reaction ID" value="UER00884"/>
</dbReference>
<dbReference type="Proteomes" id="UP000001411">
    <property type="component" value="Chromosome"/>
</dbReference>
<dbReference type="GO" id="GO:0005886">
    <property type="term" value="C:plasma membrane"/>
    <property type="evidence" value="ECO:0007669"/>
    <property type="project" value="TreeGrafter"/>
</dbReference>
<dbReference type="GO" id="GO:0005524">
    <property type="term" value="F:ATP binding"/>
    <property type="evidence" value="ECO:0007669"/>
    <property type="project" value="UniProtKB-KW"/>
</dbReference>
<dbReference type="GO" id="GO:0005525">
    <property type="term" value="F:GTP binding"/>
    <property type="evidence" value="ECO:0007669"/>
    <property type="project" value="UniProtKB-KW"/>
</dbReference>
<dbReference type="GO" id="GO:0008728">
    <property type="term" value="F:GTP diphosphokinase activity"/>
    <property type="evidence" value="ECO:0007669"/>
    <property type="project" value="UniProtKB-EC"/>
</dbReference>
<dbReference type="GO" id="GO:0016301">
    <property type="term" value="F:kinase activity"/>
    <property type="evidence" value="ECO:0007669"/>
    <property type="project" value="UniProtKB-KW"/>
</dbReference>
<dbReference type="GO" id="GO:0015970">
    <property type="term" value="P:guanosine tetraphosphate biosynthetic process"/>
    <property type="evidence" value="ECO:0007669"/>
    <property type="project" value="UniProtKB-UniPathway"/>
</dbReference>
<dbReference type="CDD" id="cd04876">
    <property type="entry name" value="ACT_RelA-SpoT"/>
    <property type="match status" value="1"/>
</dbReference>
<dbReference type="CDD" id="cd00077">
    <property type="entry name" value="HDc"/>
    <property type="match status" value="1"/>
</dbReference>
<dbReference type="CDD" id="cd05399">
    <property type="entry name" value="NT_Rel-Spo_like"/>
    <property type="match status" value="1"/>
</dbReference>
<dbReference type="CDD" id="cd01668">
    <property type="entry name" value="TGS_RSH"/>
    <property type="match status" value="1"/>
</dbReference>
<dbReference type="FunFam" id="3.10.20.30:FF:000002">
    <property type="entry name" value="GTP pyrophosphokinase (RelA/SpoT)"/>
    <property type="match status" value="1"/>
</dbReference>
<dbReference type="FunFam" id="1.10.3210.10:FF:000001">
    <property type="entry name" value="GTP pyrophosphokinase RelA"/>
    <property type="match status" value="1"/>
</dbReference>
<dbReference type="FunFam" id="3.30.460.10:FF:000001">
    <property type="entry name" value="GTP pyrophosphokinase RelA"/>
    <property type="match status" value="1"/>
</dbReference>
<dbReference type="Gene3D" id="3.10.20.30">
    <property type="match status" value="1"/>
</dbReference>
<dbReference type="Gene3D" id="3.30.70.260">
    <property type="match status" value="1"/>
</dbReference>
<dbReference type="Gene3D" id="3.30.460.10">
    <property type="entry name" value="Beta Polymerase, domain 2"/>
    <property type="match status" value="1"/>
</dbReference>
<dbReference type="Gene3D" id="1.10.3210.10">
    <property type="entry name" value="Hypothetical protein af1432"/>
    <property type="match status" value="1"/>
</dbReference>
<dbReference type="InterPro" id="IPR045865">
    <property type="entry name" value="ACT-like_dom_sf"/>
</dbReference>
<dbReference type="InterPro" id="IPR002912">
    <property type="entry name" value="ACT_dom"/>
</dbReference>
<dbReference type="InterPro" id="IPR012675">
    <property type="entry name" value="Beta-grasp_dom_sf"/>
</dbReference>
<dbReference type="InterPro" id="IPR003607">
    <property type="entry name" value="HD/PDEase_dom"/>
</dbReference>
<dbReference type="InterPro" id="IPR006674">
    <property type="entry name" value="HD_domain"/>
</dbReference>
<dbReference type="InterPro" id="IPR043519">
    <property type="entry name" value="NT_sf"/>
</dbReference>
<dbReference type="InterPro" id="IPR004811">
    <property type="entry name" value="RelA/Spo_fam"/>
</dbReference>
<dbReference type="InterPro" id="IPR045600">
    <property type="entry name" value="RelA/SpoT_AH_RIS"/>
</dbReference>
<dbReference type="InterPro" id="IPR007685">
    <property type="entry name" value="RelA_SpoT"/>
</dbReference>
<dbReference type="InterPro" id="IPR004095">
    <property type="entry name" value="TGS"/>
</dbReference>
<dbReference type="InterPro" id="IPR012676">
    <property type="entry name" value="TGS-like"/>
</dbReference>
<dbReference type="InterPro" id="IPR033655">
    <property type="entry name" value="TGS_RelA/SpoT"/>
</dbReference>
<dbReference type="NCBIfam" id="TIGR00691">
    <property type="entry name" value="spoT_relA"/>
    <property type="match status" value="1"/>
</dbReference>
<dbReference type="PANTHER" id="PTHR21262:SF31">
    <property type="entry name" value="GTP PYROPHOSPHOKINASE"/>
    <property type="match status" value="1"/>
</dbReference>
<dbReference type="PANTHER" id="PTHR21262">
    <property type="entry name" value="GUANOSINE-3',5'-BIS DIPHOSPHATE 3'-PYROPHOSPHOHYDROLASE"/>
    <property type="match status" value="1"/>
</dbReference>
<dbReference type="Pfam" id="PF13291">
    <property type="entry name" value="ACT_4"/>
    <property type="match status" value="1"/>
</dbReference>
<dbReference type="Pfam" id="PF13328">
    <property type="entry name" value="HD_4"/>
    <property type="match status" value="1"/>
</dbReference>
<dbReference type="Pfam" id="PF19296">
    <property type="entry name" value="RelA_AH_RIS"/>
    <property type="match status" value="1"/>
</dbReference>
<dbReference type="Pfam" id="PF04607">
    <property type="entry name" value="RelA_SpoT"/>
    <property type="match status" value="1"/>
</dbReference>
<dbReference type="Pfam" id="PF02824">
    <property type="entry name" value="TGS"/>
    <property type="match status" value="1"/>
</dbReference>
<dbReference type="SMART" id="SM00471">
    <property type="entry name" value="HDc"/>
    <property type="match status" value="1"/>
</dbReference>
<dbReference type="SMART" id="SM00954">
    <property type="entry name" value="RelA_SpoT"/>
    <property type="match status" value="1"/>
</dbReference>
<dbReference type="SUPFAM" id="SSF55021">
    <property type="entry name" value="ACT-like"/>
    <property type="match status" value="1"/>
</dbReference>
<dbReference type="SUPFAM" id="SSF109604">
    <property type="entry name" value="HD-domain/PDEase-like"/>
    <property type="match status" value="1"/>
</dbReference>
<dbReference type="SUPFAM" id="SSF81301">
    <property type="entry name" value="Nucleotidyltransferase"/>
    <property type="match status" value="1"/>
</dbReference>
<dbReference type="SUPFAM" id="SSF81271">
    <property type="entry name" value="TGS-like"/>
    <property type="match status" value="1"/>
</dbReference>
<dbReference type="PROSITE" id="PS51671">
    <property type="entry name" value="ACT"/>
    <property type="match status" value="1"/>
</dbReference>
<dbReference type="PROSITE" id="PS51831">
    <property type="entry name" value="HD"/>
    <property type="match status" value="1"/>
</dbReference>
<dbReference type="PROSITE" id="PS51880">
    <property type="entry name" value="TGS"/>
    <property type="match status" value="1"/>
</dbReference>